<gene>
    <name type="primary">MT-CYB</name>
    <name type="synonym">COB</name>
    <name type="synonym">CYTB</name>
    <name type="synonym">MTCYB</name>
</gene>
<sequence>MTNIRKVHPLAKIINSSLIDLPTPSNISAWWNFGSLLAACLALQILTGLFLAMHYTSDTTTAFSSVTHICRDVNYGWIIRYMHANGASMFFICLYMHVGRGLYYGSYTLTETWNIGIILLFTIMATAFMGYVLPWGQMSFWGATVITNLLSAVPYIGTNLVEWIWGGFSVDKATLTRFFAFHFILPFMASALVMVHLLFLHETGSNNPSGISSDSDKIPFHPYYTIKDILGTLLLILTLMLLVMFSPDLLGDPDNYIPANPLSTPPHIKPEWYFLFAYAILRSIPNKLGGVLALLLSILILAIIPLLHTSKQRGMMFRPISQCLFWLLVADLLTLTWIGGQPVEHPFITIGQLASILYFTILLVFMPIAGIIENNILKW</sequence>
<comment type="function">
    <text evidence="2">Component of the ubiquinol-cytochrome c reductase complex (complex III or cytochrome b-c1 complex) that is part of the mitochondrial respiratory chain. The b-c1 complex mediates electron transfer from ubiquinol to cytochrome c. Contributes to the generation of a proton gradient across the mitochondrial membrane that is then used for ATP synthesis.</text>
</comment>
<comment type="cofactor">
    <cofactor evidence="2">
        <name>heme b</name>
        <dbReference type="ChEBI" id="CHEBI:60344"/>
    </cofactor>
    <text evidence="2">Binds 2 heme b groups non-covalently.</text>
</comment>
<comment type="subunit">
    <text evidence="2">The cytochrome bc1 complex contains 11 subunits: 3 respiratory subunits (MT-CYB, CYC1 and UQCRFS1), 2 core proteins (UQCRC1 and UQCRC2) and 6 low-molecular weight proteins (UQCRH/QCR6, UQCRB/QCR7, UQCRQ/QCR8, UQCR10/QCR9, UQCR11/QCR10 and a cleavage product of UQCRFS1). This cytochrome bc1 complex then forms a dimer.</text>
</comment>
<comment type="subcellular location">
    <subcellularLocation>
        <location evidence="2">Mitochondrion inner membrane</location>
        <topology evidence="2">Multi-pass membrane protein</topology>
    </subcellularLocation>
</comment>
<comment type="miscellaneous">
    <text evidence="1">Heme 1 (or BL or b562) is low-potential and absorbs at about 562 nm, and heme 2 (or BH or b566) is high-potential and absorbs at about 566 nm.</text>
</comment>
<comment type="similarity">
    <text evidence="3 4">Belongs to the cytochrome b family.</text>
</comment>
<comment type="caution">
    <text evidence="2">The full-length protein contains only eight transmembrane helices, not nine as predicted by bioinformatics tools.</text>
</comment>
<accession>Q36266</accession>
<accession>Q08HK2</accession>
<keyword id="KW-0249">Electron transport</keyword>
<keyword id="KW-0349">Heme</keyword>
<keyword id="KW-0408">Iron</keyword>
<keyword id="KW-0472">Membrane</keyword>
<keyword id="KW-0479">Metal-binding</keyword>
<keyword id="KW-0496">Mitochondrion</keyword>
<keyword id="KW-0999">Mitochondrion inner membrane</keyword>
<keyword id="KW-0679">Respiratory chain</keyword>
<keyword id="KW-0812">Transmembrane</keyword>
<keyword id="KW-1133">Transmembrane helix</keyword>
<keyword id="KW-0813">Transport</keyword>
<keyword id="KW-0830">Ubiquinone</keyword>
<geneLocation type="mitochondrion"/>
<protein>
    <recommendedName>
        <fullName>Cytochrome b</fullName>
    </recommendedName>
    <alternativeName>
        <fullName>Complex III subunit 3</fullName>
    </alternativeName>
    <alternativeName>
        <fullName>Complex III subunit III</fullName>
    </alternativeName>
    <alternativeName>
        <fullName>Cytochrome b-c1 complex subunit 3</fullName>
    </alternativeName>
    <alternativeName>
        <fullName>Ubiquinol-cytochrome-c reductase complex cytochrome b subunit</fullName>
    </alternativeName>
</protein>
<organism>
    <name type="scientific">Zalophus californianus</name>
    <name type="common">California sealion</name>
    <dbReference type="NCBI Taxonomy" id="9704"/>
    <lineage>
        <taxon>Eukaryota</taxon>
        <taxon>Metazoa</taxon>
        <taxon>Chordata</taxon>
        <taxon>Craniata</taxon>
        <taxon>Vertebrata</taxon>
        <taxon>Euteleostomi</taxon>
        <taxon>Mammalia</taxon>
        <taxon>Eutheria</taxon>
        <taxon>Laurasiatheria</taxon>
        <taxon>Carnivora</taxon>
        <taxon>Caniformia</taxon>
        <taxon>Pinnipedia</taxon>
        <taxon>Otariidae</taxon>
        <taxon>Zalophus</taxon>
    </lineage>
</organism>
<name>CYB_ZALCA</name>
<dbReference type="EMBL" id="X82310">
    <property type="protein sequence ID" value="CAA57753.1"/>
    <property type="molecule type" value="Genomic_DNA"/>
</dbReference>
<dbReference type="EMBL" id="AM181017">
    <property type="protein sequence ID" value="CAJ56896.1"/>
    <property type="molecule type" value="Genomic_DNA"/>
</dbReference>
<dbReference type="PIR" id="S58457">
    <property type="entry name" value="S58457"/>
</dbReference>
<dbReference type="RefSeq" id="YP_778707.1">
    <property type="nucleotide sequence ID" value="NC_008416.1"/>
</dbReference>
<dbReference type="SMR" id="Q36266"/>
<dbReference type="GeneID" id="4355793"/>
<dbReference type="KEGG" id="zca:4355793"/>
<dbReference type="CTD" id="4519"/>
<dbReference type="OrthoDB" id="244at2759"/>
<dbReference type="Proteomes" id="UP000515165">
    <property type="component" value="Mitochondrion MT"/>
</dbReference>
<dbReference type="GO" id="GO:0005743">
    <property type="term" value="C:mitochondrial inner membrane"/>
    <property type="evidence" value="ECO:0007669"/>
    <property type="project" value="UniProtKB-SubCell"/>
</dbReference>
<dbReference type="GO" id="GO:0045275">
    <property type="term" value="C:respiratory chain complex III"/>
    <property type="evidence" value="ECO:0007669"/>
    <property type="project" value="InterPro"/>
</dbReference>
<dbReference type="GO" id="GO:0046872">
    <property type="term" value="F:metal ion binding"/>
    <property type="evidence" value="ECO:0007669"/>
    <property type="project" value="UniProtKB-KW"/>
</dbReference>
<dbReference type="GO" id="GO:0008121">
    <property type="term" value="F:ubiquinol-cytochrome-c reductase activity"/>
    <property type="evidence" value="ECO:0007669"/>
    <property type="project" value="InterPro"/>
</dbReference>
<dbReference type="GO" id="GO:0006122">
    <property type="term" value="P:mitochondrial electron transport, ubiquinol to cytochrome c"/>
    <property type="evidence" value="ECO:0007669"/>
    <property type="project" value="TreeGrafter"/>
</dbReference>
<dbReference type="CDD" id="cd00290">
    <property type="entry name" value="cytochrome_b_C"/>
    <property type="match status" value="1"/>
</dbReference>
<dbReference type="CDD" id="cd00284">
    <property type="entry name" value="Cytochrome_b_N"/>
    <property type="match status" value="1"/>
</dbReference>
<dbReference type="FunFam" id="1.20.810.10:FF:000002">
    <property type="entry name" value="Cytochrome b"/>
    <property type="match status" value="1"/>
</dbReference>
<dbReference type="Gene3D" id="1.20.810.10">
    <property type="entry name" value="Cytochrome Bc1 Complex, Chain C"/>
    <property type="match status" value="1"/>
</dbReference>
<dbReference type="InterPro" id="IPR005798">
    <property type="entry name" value="Cyt_b/b6_C"/>
</dbReference>
<dbReference type="InterPro" id="IPR036150">
    <property type="entry name" value="Cyt_b/b6_C_sf"/>
</dbReference>
<dbReference type="InterPro" id="IPR005797">
    <property type="entry name" value="Cyt_b/b6_N"/>
</dbReference>
<dbReference type="InterPro" id="IPR027387">
    <property type="entry name" value="Cytb/b6-like_sf"/>
</dbReference>
<dbReference type="InterPro" id="IPR030689">
    <property type="entry name" value="Cytochrome_b"/>
</dbReference>
<dbReference type="InterPro" id="IPR048260">
    <property type="entry name" value="Cytochrome_b_C_euk/bac"/>
</dbReference>
<dbReference type="InterPro" id="IPR048259">
    <property type="entry name" value="Cytochrome_b_N_euk/bac"/>
</dbReference>
<dbReference type="InterPro" id="IPR016174">
    <property type="entry name" value="Di-haem_cyt_TM"/>
</dbReference>
<dbReference type="PANTHER" id="PTHR19271">
    <property type="entry name" value="CYTOCHROME B"/>
    <property type="match status" value="1"/>
</dbReference>
<dbReference type="PANTHER" id="PTHR19271:SF16">
    <property type="entry name" value="CYTOCHROME B"/>
    <property type="match status" value="1"/>
</dbReference>
<dbReference type="Pfam" id="PF00032">
    <property type="entry name" value="Cytochrom_B_C"/>
    <property type="match status" value="1"/>
</dbReference>
<dbReference type="Pfam" id="PF00033">
    <property type="entry name" value="Cytochrome_B"/>
    <property type="match status" value="1"/>
</dbReference>
<dbReference type="PIRSF" id="PIRSF038885">
    <property type="entry name" value="COB"/>
    <property type="match status" value="1"/>
</dbReference>
<dbReference type="SUPFAM" id="SSF81648">
    <property type="entry name" value="a domain/subunit of cytochrome bc1 complex (Ubiquinol-cytochrome c reductase)"/>
    <property type="match status" value="1"/>
</dbReference>
<dbReference type="SUPFAM" id="SSF81342">
    <property type="entry name" value="Transmembrane di-heme cytochromes"/>
    <property type="match status" value="1"/>
</dbReference>
<dbReference type="PROSITE" id="PS51003">
    <property type="entry name" value="CYTB_CTER"/>
    <property type="match status" value="1"/>
</dbReference>
<dbReference type="PROSITE" id="PS51002">
    <property type="entry name" value="CYTB_NTER"/>
    <property type="match status" value="1"/>
</dbReference>
<feature type="chain" id="PRO_0000061727" description="Cytochrome b">
    <location>
        <begin position="1"/>
        <end position="379"/>
    </location>
</feature>
<feature type="transmembrane region" description="Helical" evidence="2">
    <location>
        <begin position="33"/>
        <end position="53"/>
    </location>
</feature>
<feature type="transmembrane region" description="Helical" evidence="2">
    <location>
        <begin position="77"/>
        <end position="98"/>
    </location>
</feature>
<feature type="transmembrane region" description="Helical" evidence="2">
    <location>
        <begin position="113"/>
        <end position="133"/>
    </location>
</feature>
<feature type="transmembrane region" description="Helical" evidence="2">
    <location>
        <begin position="178"/>
        <end position="198"/>
    </location>
</feature>
<feature type="transmembrane region" description="Helical" evidence="2">
    <location>
        <begin position="226"/>
        <end position="246"/>
    </location>
</feature>
<feature type="transmembrane region" description="Helical" evidence="2">
    <location>
        <begin position="288"/>
        <end position="308"/>
    </location>
</feature>
<feature type="transmembrane region" description="Helical" evidence="2">
    <location>
        <begin position="320"/>
        <end position="340"/>
    </location>
</feature>
<feature type="transmembrane region" description="Helical" evidence="2">
    <location>
        <begin position="347"/>
        <end position="367"/>
    </location>
</feature>
<feature type="binding site" description="axial binding residue" evidence="2">
    <location>
        <position position="83"/>
    </location>
    <ligand>
        <name>heme b</name>
        <dbReference type="ChEBI" id="CHEBI:60344"/>
        <label>b562</label>
    </ligand>
    <ligandPart>
        <name>Fe</name>
        <dbReference type="ChEBI" id="CHEBI:18248"/>
    </ligandPart>
</feature>
<feature type="binding site" description="axial binding residue" evidence="2">
    <location>
        <position position="97"/>
    </location>
    <ligand>
        <name>heme b</name>
        <dbReference type="ChEBI" id="CHEBI:60344"/>
        <label>b566</label>
    </ligand>
    <ligandPart>
        <name>Fe</name>
        <dbReference type="ChEBI" id="CHEBI:18248"/>
    </ligandPart>
</feature>
<feature type="binding site" description="axial binding residue" evidence="2">
    <location>
        <position position="182"/>
    </location>
    <ligand>
        <name>heme b</name>
        <dbReference type="ChEBI" id="CHEBI:60344"/>
        <label>b562</label>
    </ligand>
    <ligandPart>
        <name>Fe</name>
        <dbReference type="ChEBI" id="CHEBI:18248"/>
    </ligandPart>
</feature>
<feature type="binding site" description="axial binding residue" evidence="2">
    <location>
        <position position="196"/>
    </location>
    <ligand>
        <name>heme b</name>
        <dbReference type="ChEBI" id="CHEBI:60344"/>
        <label>b566</label>
    </ligand>
    <ligandPart>
        <name>Fe</name>
        <dbReference type="ChEBI" id="CHEBI:18248"/>
    </ligandPart>
</feature>
<feature type="binding site" evidence="2">
    <location>
        <position position="201"/>
    </location>
    <ligand>
        <name>a ubiquinone</name>
        <dbReference type="ChEBI" id="CHEBI:16389"/>
    </ligand>
</feature>
<evidence type="ECO:0000250" key="1"/>
<evidence type="ECO:0000250" key="2">
    <source>
        <dbReference type="UniProtKB" id="P00157"/>
    </source>
</evidence>
<evidence type="ECO:0000255" key="3">
    <source>
        <dbReference type="PROSITE-ProRule" id="PRU00967"/>
    </source>
</evidence>
<evidence type="ECO:0000255" key="4">
    <source>
        <dbReference type="PROSITE-ProRule" id="PRU00968"/>
    </source>
</evidence>
<reference key="1">
    <citation type="journal article" date="1995" name="J. Mol. Evol.">
        <title>A molecular view of pinniped relationships with particular emphasis on the true seals.</title>
        <authorList>
            <person name="Arnason U."/>
            <person name="Bodin K."/>
            <person name="Gullberg A."/>
            <person name="Ledje C."/>
            <person name="Mouchaty S."/>
        </authorList>
    </citation>
    <scope>NUCLEOTIDE SEQUENCE [GENOMIC DNA]</scope>
</reference>
<reference key="2">
    <citation type="journal article" date="2006" name="Mol. Phylogenet. Evol.">
        <title>Pinniped phylogeny and a new hypothesis for their origin and dispersal.</title>
        <authorList>
            <person name="Arnason U."/>
            <person name="Gullberg A."/>
            <person name="Janke A."/>
            <person name="Kullberg M."/>
            <person name="Lehman N."/>
            <person name="Petrov E.A."/>
            <person name="Vainola R."/>
        </authorList>
    </citation>
    <scope>NUCLEOTIDE SEQUENCE [GENOMIC DNA]</scope>
</reference>
<proteinExistence type="inferred from homology"/>